<gene>
    <name type="ordered locus">MIMI_R886</name>
</gene>
<proteinExistence type="predicted"/>
<sequence>IHQEPIYPYILVEHGADISANYDRTIINSSEYGNFEIVKYLIDNGADITAINEYGFTPLDLSSKNGHYEIVKLLVECRASIIKTDNLTLILASENGHIKIVKLLVENGADIRYHNNYSLQLALKEAIVKS</sequence>
<keyword id="KW-0040">ANK repeat</keyword>
<keyword id="KW-1185">Reference proteome</keyword>
<keyword id="KW-0677">Repeat</keyword>
<name>YR886_MIMIV</name>
<protein>
    <recommendedName>
        <fullName>Putative ankyrin repeat protein R886</fullName>
    </recommendedName>
</protein>
<accession>Q5UQY4</accession>
<organismHost>
    <name type="scientific">Acanthamoeba polyphaga</name>
    <name type="common">Amoeba</name>
    <dbReference type="NCBI Taxonomy" id="5757"/>
</organismHost>
<organism>
    <name type="scientific">Acanthamoeba polyphaga mimivirus</name>
    <name type="common">APMV</name>
    <dbReference type="NCBI Taxonomy" id="212035"/>
    <lineage>
        <taxon>Viruses</taxon>
        <taxon>Varidnaviria</taxon>
        <taxon>Bamfordvirae</taxon>
        <taxon>Nucleocytoviricota</taxon>
        <taxon>Megaviricetes</taxon>
        <taxon>Imitervirales</taxon>
        <taxon>Mimiviridae</taxon>
        <taxon>Megamimivirinae</taxon>
        <taxon>Mimivirus</taxon>
        <taxon>Mimivirus bradfordmassiliense</taxon>
    </lineage>
</organism>
<reference key="1">
    <citation type="journal article" date="2004" name="Science">
        <title>The 1.2-megabase genome sequence of Mimivirus.</title>
        <authorList>
            <person name="Raoult D."/>
            <person name="Audic S."/>
            <person name="Robert C."/>
            <person name="Abergel C."/>
            <person name="Renesto P."/>
            <person name="Ogata H."/>
            <person name="La Scola B."/>
            <person name="Susan M."/>
            <person name="Claverie J.-M."/>
        </authorList>
    </citation>
    <scope>NUCLEOTIDE SEQUENCE [LARGE SCALE GENOMIC DNA]</scope>
    <source>
        <strain>Rowbotham-Bradford</strain>
    </source>
</reference>
<feature type="chain" id="PRO_0000067223" description="Putative ankyrin repeat protein R886">
    <location>
        <begin position="1" status="less than"/>
        <end position="130"/>
    </location>
</feature>
<feature type="repeat" description="ANK 1">
    <location>
        <begin position="21"/>
        <end position="50"/>
    </location>
</feature>
<feature type="repeat" description="ANK 2">
    <location>
        <begin position="54"/>
        <end position="83"/>
    </location>
</feature>
<feature type="repeat" description="ANK 3">
    <location>
        <begin position="85"/>
        <end position="113"/>
    </location>
</feature>
<feature type="non-terminal residue">
    <location>
        <position position="1"/>
    </location>
</feature>
<dbReference type="EMBL" id="AY653733">
    <property type="protein sequence ID" value="AAV51143.1"/>
    <property type="molecule type" value="Genomic_DNA"/>
</dbReference>
<dbReference type="SMR" id="Q5UQY4"/>
<dbReference type="Proteomes" id="UP000001134">
    <property type="component" value="Genome"/>
</dbReference>
<dbReference type="Gene3D" id="1.25.40.20">
    <property type="entry name" value="Ankyrin repeat-containing domain"/>
    <property type="match status" value="1"/>
</dbReference>
<dbReference type="InterPro" id="IPR002110">
    <property type="entry name" value="Ankyrin_rpt"/>
</dbReference>
<dbReference type="InterPro" id="IPR036770">
    <property type="entry name" value="Ankyrin_rpt-contain_sf"/>
</dbReference>
<dbReference type="PANTHER" id="PTHR24188">
    <property type="entry name" value="ANKYRIN REPEAT PROTEIN"/>
    <property type="match status" value="1"/>
</dbReference>
<dbReference type="PANTHER" id="PTHR24188:SF29">
    <property type="entry name" value="GH09064P"/>
    <property type="match status" value="1"/>
</dbReference>
<dbReference type="Pfam" id="PF00023">
    <property type="entry name" value="Ank"/>
    <property type="match status" value="1"/>
</dbReference>
<dbReference type="Pfam" id="PF12796">
    <property type="entry name" value="Ank_2"/>
    <property type="match status" value="1"/>
</dbReference>
<dbReference type="PRINTS" id="PR01415">
    <property type="entry name" value="ANKYRIN"/>
</dbReference>
<dbReference type="SMART" id="SM00248">
    <property type="entry name" value="ANK"/>
    <property type="match status" value="3"/>
</dbReference>
<dbReference type="SUPFAM" id="SSF48403">
    <property type="entry name" value="Ankyrin repeat"/>
    <property type="match status" value="1"/>
</dbReference>
<dbReference type="PROSITE" id="PS50297">
    <property type="entry name" value="ANK_REP_REGION"/>
    <property type="match status" value="1"/>
</dbReference>
<dbReference type="PROSITE" id="PS50088">
    <property type="entry name" value="ANK_REPEAT"/>
    <property type="match status" value="3"/>
</dbReference>